<evidence type="ECO:0000255" key="1">
    <source>
        <dbReference type="HAMAP-Rule" id="MF_03143"/>
    </source>
</evidence>
<organism>
    <name type="scientific">Ajellomyces capsulatus (strain G186AR / H82 / ATCC MYA-2454 / RMSCC 2432)</name>
    <name type="common">Darling's disease fungus</name>
    <name type="synonym">Histoplasma capsulatum</name>
    <dbReference type="NCBI Taxonomy" id="447093"/>
    <lineage>
        <taxon>Eukaryota</taxon>
        <taxon>Fungi</taxon>
        <taxon>Dikarya</taxon>
        <taxon>Ascomycota</taxon>
        <taxon>Pezizomycotina</taxon>
        <taxon>Eurotiomycetes</taxon>
        <taxon>Eurotiomycetidae</taxon>
        <taxon>Onygenales</taxon>
        <taxon>Ajellomycetaceae</taxon>
        <taxon>Histoplasma</taxon>
    </lineage>
</organism>
<reference key="1">
    <citation type="submission" date="2009-02" db="EMBL/GenBank/DDBJ databases">
        <title>The genome sequence of Ajellomyces capsulatus strain G186AR.</title>
        <authorList>
            <person name="Champion M."/>
            <person name="Cuomo C.A."/>
            <person name="Ma L.-J."/>
            <person name="Henn M.R."/>
            <person name="Sil A."/>
            <person name="Goldman B."/>
            <person name="Young S.K."/>
            <person name="Kodira C.D."/>
            <person name="Zeng Q."/>
            <person name="Koehrsen M."/>
            <person name="Alvarado L."/>
            <person name="Berlin A."/>
            <person name="Borenstein D."/>
            <person name="Chen Z."/>
            <person name="Engels R."/>
            <person name="Freedman E."/>
            <person name="Gellesch M."/>
            <person name="Goldberg J."/>
            <person name="Griggs A."/>
            <person name="Gujja S."/>
            <person name="Heiman D."/>
            <person name="Hepburn T."/>
            <person name="Howarth C."/>
            <person name="Jen D."/>
            <person name="Larson L."/>
            <person name="Lewis B."/>
            <person name="Mehta T."/>
            <person name="Park D."/>
            <person name="Pearson M."/>
            <person name="Roberts A."/>
            <person name="Saif S."/>
            <person name="Shea T."/>
            <person name="Shenoy N."/>
            <person name="Sisk P."/>
            <person name="Stolte C."/>
            <person name="Sykes S."/>
            <person name="Walk T."/>
            <person name="White J."/>
            <person name="Yandava C."/>
            <person name="Klein B."/>
            <person name="McEwen J.G."/>
            <person name="Puccia R."/>
            <person name="Goldman G.H."/>
            <person name="Felipe M.S."/>
            <person name="Nino-Vega G."/>
            <person name="San-Blas G."/>
            <person name="Taylor J."/>
            <person name="Mendoza L."/>
            <person name="Galagan J.E."/>
            <person name="Nusbaum C."/>
            <person name="Birren B.W."/>
        </authorList>
    </citation>
    <scope>NUCLEOTIDE SEQUENCE [LARGE SCALE GENOMIC DNA]</scope>
    <source>
        <strain>G186AR / H82 / ATCC MYA-2454 / RMSCC 2432</strain>
    </source>
</reference>
<dbReference type="EC" id="4.2.3.4" evidence="1"/>
<dbReference type="EC" id="2.5.1.19" evidence="1"/>
<dbReference type="EC" id="2.7.1.71" evidence="1"/>
<dbReference type="EC" id="4.2.1.10" evidence="1"/>
<dbReference type="EC" id="1.1.1.25" evidence="1"/>
<dbReference type="EMBL" id="GG663366">
    <property type="protein sequence ID" value="EEH08604.1"/>
    <property type="molecule type" value="Genomic_DNA"/>
</dbReference>
<dbReference type="RefSeq" id="XP_045289085.1">
    <property type="nucleotide sequence ID" value="XM_045430942.1"/>
</dbReference>
<dbReference type="SMR" id="C0NL63"/>
<dbReference type="FunCoup" id="C0NL63">
    <property type="interactions" value="435"/>
</dbReference>
<dbReference type="STRING" id="447093.C0NL63"/>
<dbReference type="GeneID" id="69036909"/>
<dbReference type="VEuPathDB" id="FungiDB:I7I50_07669"/>
<dbReference type="HOGENOM" id="CLU_001201_1_2_1"/>
<dbReference type="InParanoid" id="C0NL63"/>
<dbReference type="UniPathway" id="UPA00053">
    <property type="reaction ID" value="UER00085"/>
</dbReference>
<dbReference type="UniPathway" id="UPA00053">
    <property type="reaction ID" value="UER00086"/>
</dbReference>
<dbReference type="UniPathway" id="UPA00053">
    <property type="reaction ID" value="UER00087"/>
</dbReference>
<dbReference type="UniPathway" id="UPA00053">
    <property type="reaction ID" value="UER00088"/>
</dbReference>
<dbReference type="UniPathway" id="UPA00053">
    <property type="reaction ID" value="UER00089"/>
</dbReference>
<dbReference type="Proteomes" id="UP000001631">
    <property type="component" value="Unassembled WGS sequence"/>
</dbReference>
<dbReference type="GO" id="GO:0005737">
    <property type="term" value="C:cytoplasm"/>
    <property type="evidence" value="ECO:0007669"/>
    <property type="project" value="UniProtKB-SubCell"/>
</dbReference>
<dbReference type="GO" id="GO:0003855">
    <property type="term" value="F:3-dehydroquinate dehydratase activity"/>
    <property type="evidence" value="ECO:0007669"/>
    <property type="project" value="UniProtKB-UniRule"/>
</dbReference>
<dbReference type="GO" id="GO:0003856">
    <property type="term" value="F:3-dehydroquinate synthase activity"/>
    <property type="evidence" value="ECO:0007669"/>
    <property type="project" value="UniProtKB-UniRule"/>
</dbReference>
<dbReference type="GO" id="GO:0003866">
    <property type="term" value="F:3-phosphoshikimate 1-carboxyvinyltransferase activity"/>
    <property type="evidence" value="ECO:0007669"/>
    <property type="project" value="UniProtKB-UniRule"/>
</dbReference>
<dbReference type="GO" id="GO:0005524">
    <property type="term" value="F:ATP binding"/>
    <property type="evidence" value="ECO:0007669"/>
    <property type="project" value="UniProtKB-UniRule"/>
</dbReference>
<dbReference type="GO" id="GO:0046872">
    <property type="term" value="F:metal ion binding"/>
    <property type="evidence" value="ECO:0007669"/>
    <property type="project" value="UniProtKB-UniRule"/>
</dbReference>
<dbReference type="GO" id="GO:0004764">
    <property type="term" value="F:shikimate 3-dehydrogenase (NADP+) activity"/>
    <property type="evidence" value="ECO:0007669"/>
    <property type="project" value="UniProtKB-UniRule"/>
</dbReference>
<dbReference type="GO" id="GO:0004765">
    <property type="term" value="F:shikimate kinase activity"/>
    <property type="evidence" value="ECO:0007669"/>
    <property type="project" value="UniProtKB-UniRule"/>
</dbReference>
<dbReference type="GO" id="GO:0008652">
    <property type="term" value="P:amino acid biosynthetic process"/>
    <property type="evidence" value="ECO:0007669"/>
    <property type="project" value="UniProtKB-KW"/>
</dbReference>
<dbReference type="GO" id="GO:0009073">
    <property type="term" value="P:aromatic amino acid family biosynthetic process"/>
    <property type="evidence" value="ECO:0007669"/>
    <property type="project" value="UniProtKB-UniRule"/>
</dbReference>
<dbReference type="GO" id="GO:0009423">
    <property type="term" value="P:chorismate biosynthetic process"/>
    <property type="evidence" value="ECO:0007669"/>
    <property type="project" value="UniProtKB-UniRule"/>
</dbReference>
<dbReference type="CDD" id="cd00502">
    <property type="entry name" value="DHQase_I"/>
    <property type="match status" value="1"/>
</dbReference>
<dbReference type="CDD" id="cd08195">
    <property type="entry name" value="DHQS"/>
    <property type="match status" value="1"/>
</dbReference>
<dbReference type="CDD" id="cd01556">
    <property type="entry name" value="EPSP_synthase"/>
    <property type="match status" value="1"/>
</dbReference>
<dbReference type="CDD" id="cd01065">
    <property type="entry name" value="NAD_bind_Shikimate_DH"/>
    <property type="match status" value="1"/>
</dbReference>
<dbReference type="CDD" id="cd00464">
    <property type="entry name" value="SK"/>
    <property type="match status" value="1"/>
</dbReference>
<dbReference type="FunFam" id="1.20.1090.10:FF:000007">
    <property type="entry name" value="Pentafunctional AROM polypeptide"/>
    <property type="match status" value="1"/>
</dbReference>
<dbReference type="FunFam" id="3.20.20.70:FF:000135">
    <property type="entry name" value="Pentafunctional AROM polypeptide"/>
    <property type="match status" value="1"/>
</dbReference>
<dbReference type="FunFam" id="3.40.50.1970:FF:000007">
    <property type="entry name" value="Pentafunctional AROM polypeptide"/>
    <property type="match status" value="1"/>
</dbReference>
<dbReference type="FunFam" id="3.40.50.300:FF:001256">
    <property type="entry name" value="Pentafunctional AROM polypeptide"/>
    <property type="match status" value="1"/>
</dbReference>
<dbReference type="FunFam" id="3.65.10.10:FF:000007">
    <property type="entry name" value="Pentafunctional AROM polypeptide"/>
    <property type="match status" value="1"/>
</dbReference>
<dbReference type="FunFam" id="3.65.10.10:FF:000008">
    <property type="entry name" value="Pentafunctional AROM polypeptide"/>
    <property type="match status" value="1"/>
</dbReference>
<dbReference type="Gene3D" id="3.40.50.1970">
    <property type="match status" value="1"/>
</dbReference>
<dbReference type="Gene3D" id="3.20.20.70">
    <property type="entry name" value="Aldolase class I"/>
    <property type="match status" value="1"/>
</dbReference>
<dbReference type="Gene3D" id="1.20.1090.10">
    <property type="entry name" value="Dehydroquinate synthase-like - alpha domain"/>
    <property type="match status" value="1"/>
</dbReference>
<dbReference type="Gene3D" id="3.65.10.10">
    <property type="entry name" value="Enolpyruvate transferase domain"/>
    <property type="match status" value="2"/>
</dbReference>
<dbReference type="Gene3D" id="3.40.50.10860">
    <property type="entry name" value="Leucine Dehydrogenase, chain A, domain 1"/>
    <property type="match status" value="1"/>
</dbReference>
<dbReference type="Gene3D" id="3.40.50.720">
    <property type="entry name" value="NAD(P)-binding Rossmann-like Domain"/>
    <property type="match status" value="1"/>
</dbReference>
<dbReference type="Gene3D" id="3.40.50.300">
    <property type="entry name" value="P-loop containing nucleotide triphosphate hydrolases"/>
    <property type="match status" value="1"/>
</dbReference>
<dbReference type="HAMAP" id="MF_00210">
    <property type="entry name" value="EPSP_synth"/>
    <property type="match status" value="1"/>
</dbReference>
<dbReference type="HAMAP" id="MF_03143">
    <property type="entry name" value="Pentafunct_AroM"/>
    <property type="match status" value="1"/>
</dbReference>
<dbReference type="HAMAP" id="MF_00109">
    <property type="entry name" value="Shikimate_kinase"/>
    <property type="match status" value="1"/>
</dbReference>
<dbReference type="InterPro" id="IPR018508">
    <property type="entry name" value="3-dehydroquinate_DH_AS"/>
</dbReference>
<dbReference type="InterPro" id="IPR013785">
    <property type="entry name" value="Aldolase_TIM"/>
</dbReference>
<dbReference type="InterPro" id="IPR046346">
    <property type="entry name" value="Aminoacid_DH-like_N_sf"/>
</dbReference>
<dbReference type="InterPro" id="IPR016037">
    <property type="entry name" value="DHQ_synth_AroB"/>
</dbReference>
<dbReference type="InterPro" id="IPR030960">
    <property type="entry name" value="DHQS/DOIS_N"/>
</dbReference>
<dbReference type="InterPro" id="IPR056179">
    <property type="entry name" value="DHQS_C"/>
</dbReference>
<dbReference type="InterPro" id="IPR001381">
    <property type="entry name" value="DHquinase_I"/>
</dbReference>
<dbReference type="InterPro" id="IPR001986">
    <property type="entry name" value="Enolpyruvate_Tfrase_dom"/>
</dbReference>
<dbReference type="InterPro" id="IPR036968">
    <property type="entry name" value="Enolpyruvate_Tfrase_sf"/>
</dbReference>
<dbReference type="InterPro" id="IPR006264">
    <property type="entry name" value="EPSP_synthase"/>
</dbReference>
<dbReference type="InterPro" id="IPR023193">
    <property type="entry name" value="EPSP_synthase_CS"/>
</dbReference>
<dbReference type="InterPro" id="IPR036291">
    <property type="entry name" value="NAD(P)-bd_dom_sf"/>
</dbReference>
<dbReference type="InterPro" id="IPR027417">
    <property type="entry name" value="P-loop_NTPase"/>
</dbReference>
<dbReference type="InterPro" id="IPR008289">
    <property type="entry name" value="Pentafunct_AroM"/>
</dbReference>
<dbReference type="InterPro" id="IPR013792">
    <property type="entry name" value="RNA3'P_cycl/enolpyr_Trfase_a/b"/>
</dbReference>
<dbReference type="InterPro" id="IPR041121">
    <property type="entry name" value="SDH_C"/>
</dbReference>
<dbReference type="InterPro" id="IPR031322">
    <property type="entry name" value="Shikimate/glucono_kinase"/>
</dbReference>
<dbReference type="InterPro" id="IPR013708">
    <property type="entry name" value="Shikimate_DH-bd_N"/>
</dbReference>
<dbReference type="InterPro" id="IPR010110">
    <property type="entry name" value="Shikimate_DH_AroM-type"/>
</dbReference>
<dbReference type="InterPro" id="IPR000623">
    <property type="entry name" value="Shikimate_kinase/TSH1"/>
</dbReference>
<dbReference type="InterPro" id="IPR023000">
    <property type="entry name" value="Shikimate_kinase_CS"/>
</dbReference>
<dbReference type="NCBIfam" id="TIGR01356">
    <property type="entry name" value="aroA"/>
    <property type="match status" value="1"/>
</dbReference>
<dbReference type="NCBIfam" id="TIGR01357">
    <property type="entry name" value="aroB"/>
    <property type="match status" value="1"/>
</dbReference>
<dbReference type="NCBIfam" id="TIGR01093">
    <property type="entry name" value="aroD"/>
    <property type="match status" value="1"/>
</dbReference>
<dbReference type="NCBIfam" id="TIGR01809">
    <property type="entry name" value="Shik-DH-AROM"/>
    <property type="match status" value="1"/>
</dbReference>
<dbReference type="PANTHER" id="PTHR21090">
    <property type="entry name" value="AROM/DEHYDROQUINATE SYNTHASE"/>
    <property type="match status" value="1"/>
</dbReference>
<dbReference type="PANTHER" id="PTHR21090:SF5">
    <property type="entry name" value="PENTAFUNCTIONAL AROM POLYPEPTIDE"/>
    <property type="match status" value="1"/>
</dbReference>
<dbReference type="Pfam" id="PF01761">
    <property type="entry name" value="DHQ_synthase"/>
    <property type="match status" value="1"/>
</dbReference>
<dbReference type="Pfam" id="PF24621">
    <property type="entry name" value="DHQS_C"/>
    <property type="match status" value="1"/>
</dbReference>
<dbReference type="Pfam" id="PF01487">
    <property type="entry name" value="DHquinase_I"/>
    <property type="match status" value="1"/>
</dbReference>
<dbReference type="Pfam" id="PF00275">
    <property type="entry name" value="EPSP_synthase"/>
    <property type="match status" value="1"/>
</dbReference>
<dbReference type="Pfam" id="PF18317">
    <property type="entry name" value="SDH_C"/>
    <property type="match status" value="1"/>
</dbReference>
<dbReference type="Pfam" id="PF08501">
    <property type="entry name" value="Shikimate_dh_N"/>
    <property type="match status" value="1"/>
</dbReference>
<dbReference type="Pfam" id="PF01202">
    <property type="entry name" value="SKI"/>
    <property type="match status" value="1"/>
</dbReference>
<dbReference type="PIRSF" id="PIRSF000514">
    <property type="entry name" value="Pentafunct_AroM"/>
    <property type="match status" value="1"/>
</dbReference>
<dbReference type="PRINTS" id="PR01100">
    <property type="entry name" value="SHIKIMTKNASE"/>
</dbReference>
<dbReference type="SUPFAM" id="SSF51569">
    <property type="entry name" value="Aldolase"/>
    <property type="match status" value="1"/>
</dbReference>
<dbReference type="SUPFAM" id="SSF53223">
    <property type="entry name" value="Aminoacid dehydrogenase-like, N-terminal domain"/>
    <property type="match status" value="1"/>
</dbReference>
<dbReference type="SUPFAM" id="SSF56796">
    <property type="entry name" value="Dehydroquinate synthase-like"/>
    <property type="match status" value="1"/>
</dbReference>
<dbReference type="SUPFAM" id="SSF55205">
    <property type="entry name" value="EPT/RTPC-like"/>
    <property type="match status" value="1"/>
</dbReference>
<dbReference type="SUPFAM" id="SSF51735">
    <property type="entry name" value="NAD(P)-binding Rossmann-fold domains"/>
    <property type="match status" value="1"/>
</dbReference>
<dbReference type="SUPFAM" id="SSF52540">
    <property type="entry name" value="P-loop containing nucleoside triphosphate hydrolases"/>
    <property type="match status" value="1"/>
</dbReference>
<dbReference type="PROSITE" id="PS01028">
    <property type="entry name" value="DEHYDROQUINASE_I"/>
    <property type="match status" value="1"/>
</dbReference>
<dbReference type="PROSITE" id="PS00104">
    <property type="entry name" value="EPSP_SYNTHASE_1"/>
    <property type="match status" value="1"/>
</dbReference>
<dbReference type="PROSITE" id="PS00885">
    <property type="entry name" value="EPSP_SYNTHASE_2"/>
    <property type="match status" value="1"/>
</dbReference>
<dbReference type="PROSITE" id="PS01128">
    <property type="entry name" value="SHIKIMATE_KINASE"/>
    <property type="match status" value="1"/>
</dbReference>
<keyword id="KW-0028">Amino-acid biosynthesis</keyword>
<keyword id="KW-0057">Aromatic amino acid biosynthesis</keyword>
<keyword id="KW-0067">ATP-binding</keyword>
<keyword id="KW-0963">Cytoplasm</keyword>
<keyword id="KW-0418">Kinase</keyword>
<keyword id="KW-0456">Lyase</keyword>
<keyword id="KW-0479">Metal-binding</keyword>
<keyword id="KW-0511">Multifunctional enzyme</keyword>
<keyword id="KW-0521">NADP</keyword>
<keyword id="KW-0547">Nucleotide-binding</keyword>
<keyword id="KW-0560">Oxidoreductase</keyword>
<keyword id="KW-1185">Reference proteome</keyword>
<keyword id="KW-0808">Transferase</keyword>
<keyword id="KW-0862">Zinc</keyword>
<gene>
    <name type="ORF">HCBG_03893</name>
</gene>
<feature type="chain" id="PRO_0000406697" description="Pentafunctional AROM polypeptide">
    <location>
        <begin position="1"/>
        <end position="1595"/>
    </location>
</feature>
<feature type="region of interest" description="3-dehydroquinate synthase">
    <location>
        <begin position="1"/>
        <end position="384"/>
    </location>
</feature>
<feature type="region of interest" description="EPSP synthase">
    <location>
        <begin position="397"/>
        <end position="842"/>
    </location>
</feature>
<feature type="region of interest" description="Shikimate kinase">
    <location>
        <begin position="866"/>
        <end position="1057"/>
    </location>
</feature>
<feature type="region of interest" description="3-dehydroquinase">
    <location>
        <begin position="1058"/>
        <end position="1278"/>
    </location>
</feature>
<feature type="region of interest" description="Shikimate dehydrogenase">
    <location>
        <begin position="1291"/>
        <end position="1595"/>
    </location>
</feature>
<feature type="active site" description="Proton acceptor; for 3-dehydroquinate synthase activity" evidence="1">
    <location>
        <position position="260"/>
    </location>
</feature>
<feature type="active site" description="Proton acceptor; for 3-dehydroquinate synthase activity" evidence="1">
    <location>
        <position position="275"/>
    </location>
</feature>
<feature type="active site" description="For EPSP synthase activity" evidence="1">
    <location>
        <position position="824"/>
    </location>
</feature>
<feature type="active site" description="Proton acceptor; for 3-dehydroquinate dehydratase activity" evidence="1">
    <location>
        <position position="1181"/>
    </location>
</feature>
<feature type="active site" description="Schiff-base intermediate with substrate; for 3-dehydroquinate dehydratase activity" evidence="1">
    <location>
        <position position="1209"/>
    </location>
</feature>
<feature type="binding site" evidence="1">
    <location>
        <begin position="44"/>
        <end position="46"/>
    </location>
    <ligand>
        <name>NAD(+)</name>
        <dbReference type="ChEBI" id="CHEBI:57540"/>
    </ligand>
</feature>
<feature type="binding site" evidence="1">
    <location>
        <begin position="81"/>
        <end position="84"/>
    </location>
    <ligand>
        <name>NAD(+)</name>
        <dbReference type="ChEBI" id="CHEBI:57540"/>
    </ligand>
</feature>
<feature type="binding site" evidence="1">
    <location>
        <begin position="114"/>
        <end position="116"/>
    </location>
    <ligand>
        <name>NAD(+)</name>
        <dbReference type="ChEBI" id="CHEBI:57540"/>
    </ligand>
</feature>
<feature type="binding site" evidence="1">
    <location>
        <position position="119"/>
    </location>
    <ligand>
        <name>NAD(+)</name>
        <dbReference type="ChEBI" id="CHEBI:57540"/>
    </ligand>
</feature>
<feature type="binding site" evidence="1">
    <location>
        <position position="130"/>
    </location>
    <ligand>
        <name>7-phospho-2-dehydro-3-deoxy-D-arabino-heptonate</name>
        <dbReference type="ChEBI" id="CHEBI:58394"/>
    </ligand>
</feature>
<feature type="binding site" evidence="1">
    <location>
        <begin position="139"/>
        <end position="140"/>
    </location>
    <ligand>
        <name>NAD(+)</name>
        <dbReference type="ChEBI" id="CHEBI:57540"/>
    </ligand>
</feature>
<feature type="binding site" evidence="1">
    <location>
        <position position="146"/>
    </location>
    <ligand>
        <name>7-phospho-2-dehydro-3-deoxy-D-arabino-heptonate</name>
        <dbReference type="ChEBI" id="CHEBI:58394"/>
    </ligand>
</feature>
<feature type="binding site" evidence="1">
    <location>
        <position position="152"/>
    </location>
    <ligand>
        <name>7-phospho-2-dehydro-3-deoxy-D-arabino-heptonate</name>
        <dbReference type="ChEBI" id="CHEBI:58394"/>
    </ligand>
</feature>
<feature type="binding site" evidence="1">
    <location>
        <position position="161"/>
    </location>
    <ligand>
        <name>NAD(+)</name>
        <dbReference type="ChEBI" id="CHEBI:57540"/>
    </ligand>
</feature>
<feature type="binding site" evidence="1">
    <location>
        <position position="162"/>
    </location>
    <ligand>
        <name>7-phospho-2-dehydro-3-deoxy-D-arabino-heptonate</name>
        <dbReference type="ChEBI" id="CHEBI:58394"/>
    </ligand>
</feature>
<feature type="binding site" evidence="1">
    <location>
        <begin position="179"/>
        <end position="182"/>
    </location>
    <ligand>
        <name>NAD(+)</name>
        <dbReference type="ChEBI" id="CHEBI:57540"/>
    </ligand>
</feature>
<feature type="binding site" evidence="1">
    <location>
        <position position="190"/>
    </location>
    <ligand>
        <name>NAD(+)</name>
        <dbReference type="ChEBI" id="CHEBI:57540"/>
    </ligand>
</feature>
<feature type="binding site" evidence="1">
    <location>
        <begin position="194"/>
        <end position="197"/>
    </location>
    <ligand>
        <name>7-phospho-2-dehydro-3-deoxy-D-arabino-heptonate</name>
        <dbReference type="ChEBI" id="CHEBI:58394"/>
    </ligand>
</feature>
<feature type="binding site" evidence="1">
    <location>
        <position position="194"/>
    </location>
    <ligand>
        <name>Zn(2+)</name>
        <dbReference type="ChEBI" id="CHEBI:29105"/>
        <note>catalytic</note>
    </ligand>
</feature>
<feature type="binding site" evidence="1">
    <location>
        <position position="250"/>
    </location>
    <ligand>
        <name>7-phospho-2-dehydro-3-deoxy-D-arabino-heptonate</name>
        <dbReference type="ChEBI" id="CHEBI:58394"/>
    </ligand>
</feature>
<feature type="binding site" evidence="1">
    <location>
        <begin position="264"/>
        <end position="268"/>
    </location>
    <ligand>
        <name>7-phospho-2-dehydro-3-deoxy-D-arabino-heptonate</name>
        <dbReference type="ChEBI" id="CHEBI:58394"/>
    </ligand>
</feature>
<feature type="binding site" evidence="1">
    <location>
        <position position="271"/>
    </location>
    <ligand>
        <name>7-phospho-2-dehydro-3-deoxy-D-arabino-heptonate</name>
        <dbReference type="ChEBI" id="CHEBI:58394"/>
    </ligand>
</feature>
<feature type="binding site" evidence="1">
    <location>
        <position position="271"/>
    </location>
    <ligand>
        <name>Zn(2+)</name>
        <dbReference type="ChEBI" id="CHEBI:29105"/>
        <note>catalytic</note>
    </ligand>
</feature>
<feature type="binding site" evidence="1">
    <location>
        <position position="287"/>
    </location>
    <ligand>
        <name>7-phospho-2-dehydro-3-deoxy-D-arabino-heptonate</name>
        <dbReference type="ChEBI" id="CHEBI:58394"/>
    </ligand>
</feature>
<feature type="binding site" evidence="1">
    <location>
        <position position="287"/>
    </location>
    <ligand>
        <name>Zn(2+)</name>
        <dbReference type="ChEBI" id="CHEBI:29105"/>
        <note>catalytic</note>
    </ligand>
</feature>
<feature type="binding site" evidence="1">
    <location>
        <position position="356"/>
    </location>
    <ligand>
        <name>7-phospho-2-dehydro-3-deoxy-D-arabino-heptonate</name>
        <dbReference type="ChEBI" id="CHEBI:58394"/>
    </ligand>
</feature>
<feature type="binding site" evidence="1">
    <location>
        <begin position="872"/>
        <end position="879"/>
    </location>
    <ligand>
        <name>ATP</name>
        <dbReference type="ChEBI" id="CHEBI:30616"/>
    </ligand>
</feature>
<sequence length="1595" mass="173339">MGVPTKISILGRESIVADFGIWRNYVAKDLLSSCSSSTYILISDTNLTPLYLEGFQRSFEDAATNVSPKPRLLTYEIPPGESSKSRETKADIEDWMLARQPPCGRDTVIIALGGGVIGDLIGFVAATYMRGVRFVQVPTTLLAMVDSSIGGKTAIDTPNGKNLIGAIWQPQRIYLDMEFLNTLPEREFINGMAEVIKTAAISSDEKFAALERDAETILAAVKSKNTPERPRFSGIEETLKRTILSSAEFKAQVVSADEREGGLRNLLNFGHSIGHAIEAILAPQVLHGECVSIGMVKEAELARHLGILNNVSVSRISKCLASYGLPTSLKDQRIKKLTAGKHCSVEQLIAYMGVDKKNDGPKKKVVLLSAIGRTHEPRASTVSNEEIQIVLAPSIEVSPGVPKGLDVTCTPPGSKSISNRALVLAALGSGTCRLKNLLHSDDTEVMLNALERLGAATFSWEDEGEVLVVSGKGGRMEASPSELYLGNAGTASRFLTTVATLARKSSVDSSVLTGNARMKQRPIGDLVDALAANGASIEYLENLGCLPLKIASSGGFAGGEINLAAKVSSQYVSSLLMCAPYAKTPVTLRLVGGKPISQPYIDMTTAMMRSFGVEVKKSETEEHTYHIPLGFYTNPVEYIVESDASSATYPLAAAAITGTSCTVPNIGSKSLQGDARFAVDVLRPMGCAVDQSDFSTRVTGPPGGILSPLPNIDMEPMTDAFLTASVLAAVARGKGSNHTTRIFGIANQRVKECNRIKAMKDELAEFGVVCREHDDGLEIDGIDRATLHHPSDGVYCYDDHRVAMSFSVLSLVTPEPTLILEKECVGKTWPGWWDSLAQTFKVKLDGKEVGKRTETNPIVHVNKSAASIFIIGMRGAGKTTSGFWVSKALQRPFIDLDDELERTEGMTIPEIIKQRGWGGFREAELSLLRRVMTEKPTGYIFACGGGVVETPEARKLLTQYHKTTGNVILVMRDIKEIMDFLKIDKTRPAYVEDMMSVWLRRKPWYEECSNVQYYSRLTGLDGMTQVSGGFNRFLKVITGEVDSLAKMRRKENTFFVSLTLPDLSLAAHILKEVTLGSDAVELRVDLLKDPQSDNEIPSVDYVAEQISVLRSRTSVPLVFTIRTKGQGGRFPDDAYDAALQLYRLAVRMGSEFVDLEISFPEQLLRTVTEMKGFSKIITSHHDPKGQLSWVNGSWIQFYNKALQYGDVIKLVGVARSIDDNISLKKFKTWAEEKHNVPIIAINMGDKGQLSRMLNGFMTPVSHPSLPFKAAPGQLSAREIRKGLSLIGEIKAKKFAVIGNPVSASRSPAMHNTLFRQMGLPHTYGTLETDNPEVAKEFIRSPGFGGASVTIPLKISIMPLLDEIAPEAMSIGAVNTIVCAPPAPDGKSQTPRLIGHNTDWQGMVRCLSDAGAYAAATPTTASAGLVIGGGGTARAAIFALQNMGYSPIYVLGRSPDKLSSMTSTFHTDHDIRILEDVKALESLPTVAIGTIPGDKPIEPHMREILCRLFDLCEKANSDTEQARGVSTKRILLEMAYKPSVTSLMQLASDSGWTVLPGLEALVAQGVYQCEYWTNITPVYEYARNAVMGVSPSEDIL</sequence>
<proteinExistence type="inferred from homology"/>
<name>ARO1_AJECG</name>
<accession>C0NL63</accession>
<comment type="function">
    <text evidence="1">The AROM polypeptide catalyzes 5 consecutive enzymatic reactions in prechorismate polyaromatic amino acid biosynthesis.</text>
</comment>
<comment type="catalytic activity">
    <reaction evidence="1">
        <text>7-phospho-2-dehydro-3-deoxy-D-arabino-heptonate = 3-dehydroquinate + phosphate</text>
        <dbReference type="Rhea" id="RHEA:21968"/>
        <dbReference type="ChEBI" id="CHEBI:32364"/>
        <dbReference type="ChEBI" id="CHEBI:43474"/>
        <dbReference type="ChEBI" id="CHEBI:58394"/>
        <dbReference type="EC" id="4.2.3.4"/>
    </reaction>
</comment>
<comment type="catalytic activity">
    <reaction evidence="1">
        <text>3-dehydroquinate = 3-dehydroshikimate + H2O</text>
        <dbReference type="Rhea" id="RHEA:21096"/>
        <dbReference type="ChEBI" id="CHEBI:15377"/>
        <dbReference type="ChEBI" id="CHEBI:16630"/>
        <dbReference type="ChEBI" id="CHEBI:32364"/>
        <dbReference type="EC" id="4.2.1.10"/>
    </reaction>
</comment>
<comment type="catalytic activity">
    <reaction evidence="1">
        <text>shikimate + NADP(+) = 3-dehydroshikimate + NADPH + H(+)</text>
        <dbReference type="Rhea" id="RHEA:17737"/>
        <dbReference type="ChEBI" id="CHEBI:15378"/>
        <dbReference type="ChEBI" id="CHEBI:16630"/>
        <dbReference type="ChEBI" id="CHEBI:36208"/>
        <dbReference type="ChEBI" id="CHEBI:57783"/>
        <dbReference type="ChEBI" id="CHEBI:58349"/>
        <dbReference type="EC" id="1.1.1.25"/>
    </reaction>
</comment>
<comment type="catalytic activity">
    <reaction evidence="1">
        <text>shikimate + ATP = 3-phosphoshikimate + ADP + H(+)</text>
        <dbReference type="Rhea" id="RHEA:13121"/>
        <dbReference type="ChEBI" id="CHEBI:15378"/>
        <dbReference type="ChEBI" id="CHEBI:30616"/>
        <dbReference type="ChEBI" id="CHEBI:36208"/>
        <dbReference type="ChEBI" id="CHEBI:145989"/>
        <dbReference type="ChEBI" id="CHEBI:456216"/>
        <dbReference type="EC" id="2.7.1.71"/>
    </reaction>
</comment>
<comment type="catalytic activity">
    <reaction evidence="1">
        <text>3-phosphoshikimate + phosphoenolpyruvate = 5-O-(1-carboxyvinyl)-3-phosphoshikimate + phosphate</text>
        <dbReference type="Rhea" id="RHEA:21256"/>
        <dbReference type="ChEBI" id="CHEBI:43474"/>
        <dbReference type="ChEBI" id="CHEBI:57701"/>
        <dbReference type="ChEBI" id="CHEBI:58702"/>
        <dbReference type="ChEBI" id="CHEBI:145989"/>
        <dbReference type="EC" id="2.5.1.19"/>
    </reaction>
</comment>
<comment type="cofactor">
    <cofactor>
        <name>Zn(2+)</name>
        <dbReference type="ChEBI" id="CHEBI:29105"/>
    </cofactor>
    <text>Binds 2 Zn(2+) ions per subunit.</text>
</comment>
<comment type="pathway">
    <text evidence="1">Metabolic intermediate biosynthesis; chorismate biosynthesis; chorismate from D-erythrose 4-phosphate and phosphoenolpyruvate: step 2/7.</text>
</comment>
<comment type="pathway">
    <text evidence="1">Metabolic intermediate biosynthesis; chorismate biosynthesis; chorismate from D-erythrose 4-phosphate and phosphoenolpyruvate: step 3/7.</text>
</comment>
<comment type="pathway">
    <text evidence="1">Metabolic intermediate biosynthesis; chorismate biosynthesis; chorismate from D-erythrose 4-phosphate and phosphoenolpyruvate: step 4/7.</text>
</comment>
<comment type="pathway">
    <text evidence="1">Metabolic intermediate biosynthesis; chorismate biosynthesis; chorismate from D-erythrose 4-phosphate and phosphoenolpyruvate: step 5/7.</text>
</comment>
<comment type="pathway">
    <text evidence="1">Metabolic intermediate biosynthesis; chorismate biosynthesis; chorismate from D-erythrose 4-phosphate and phosphoenolpyruvate: step 6/7.</text>
</comment>
<comment type="subunit">
    <text evidence="1">Homodimer.</text>
</comment>
<comment type="subcellular location">
    <subcellularLocation>
        <location evidence="1">Cytoplasm</location>
    </subcellularLocation>
</comment>
<comment type="similarity">
    <text evidence="1">In the N-terminal section; belongs to the sugar phosphate cyclases superfamily. Dehydroquinate synthase family.</text>
</comment>
<comment type="similarity">
    <text evidence="1">In the 2nd section; belongs to the EPSP synthase family.</text>
</comment>
<comment type="similarity">
    <text evidence="1">In the 3rd section; belongs to the shikimate kinase family.</text>
</comment>
<comment type="similarity">
    <text evidence="1">In the 4th section; belongs to the type-I 3-dehydroquinase family.</text>
</comment>
<comment type="similarity">
    <text evidence="1">In the C-terminal section; belongs to the shikimate dehydrogenase family.</text>
</comment>
<protein>
    <recommendedName>
        <fullName evidence="1">Pentafunctional AROM polypeptide</fullName>
    </recommendedName>
    <domain>
        <recommendedName>
            <fullName evidence="1">3-dehydroquinate synthase</fullName>
            <shortName evidence="1">DHQS</shortName>
            <ecNumber evidence="1">4.2.3.4</ecNumber>
        </recommendedName>
    </domain>
    <domain>
        <recommendedName>
            <fullName evidence="1">3-phosphoshikimate 1-carboxyvinyltransferase</fullName>
            <ecNumber evidence="1">2.5.1.19</ecNumber>
        </recommendedName>
        <alternativeName>
            <fullName evidence="1">5-enolpyruvylshikimate-3-phosphate synthase</fullName>
            <shortName evidence="1">EPSP synthase</shortName>
            <shortName evidence="1">EPSPS</shortName>
        </alternativeName>
    </domain>
    <domain>
        <recommendedName>
            <fullName evidence="1">Shikimate kinase</fullName>
            <shortName evidence="1">SK</shortName>
            <ecNumber evidence="1">2.7.1.71</ecNumber>
        </recommendedName>
    </domain>
    <domain>
        <recommendedName>
            <fullName evidence="1">3-dehydroquinate dehydratase</fullName>
            <shortName evidence="1">3-dehydroquinase</shortName>
            <ecNumber evidence="1">4.2.1.10</ecNumber>
        </recommendedName>
    </domain>
    <domain>
        <recommendedName>
            <fullName evidence="1">Shikimate dehydrogenase</fullName>
            <ecNumber evidence="1">1.1.1.25</ecNumber>
        </recommendedName>
    </domain>
</protein>